<name>GET4_ASPFU</name>
<proteinExistence type="evidence at protein level"/>
<keyword id="KW-0963">Cytoplasm</keyword>
<keyword id="KW-0931">ER-Golgi transport</keyword>
<keyword id="KW-1185">Reference proteome</keyword>
<keyword id="KW-0813">Transport</keyword>
<dbReference type="EMBL" id="AAHF01000012">
    <property type="protein sequence ID" value="EAL85534.1"/>
    <property type="molecule type" value="Genomic_DNA"/>
</dbReference>
<dbReference type="RefSeq" id="XP_747572.1">
    <property type="nucleotide sequence ID" value="XM_742479.1"/>
</dbReference>
<dbReference type="SMR" id="Q4WDK4"/>
<dbReference type="FunCoup" id="Q4WDK4">
    <property type="interactions" value="381"/>
</dbReference>
<dbReference type="STRING" id="330879.Q4WDK4"/>
<dbReference type="EnsemblFungi" id="EAL85534">
    <property type="protein sequence ID" value="EAL85534"/>
    <property type="gene ID" value="AFUA_6G05050"/>
</dbReference>
<dbReference type="GeneID" id="3505339"/>
<dbReference type="KEGG" id="afm:AFUA_6G05050"/>
<dbReference type="VEuPathDB" id="FungiDB:Afu6g05050"/>
<dbReference type="eggNOG" id="KOG3024">
    <property type="taxonomic scope" value="Eukaryota"/>
</dbReference>
<dbReference type="HOGENOM" id="CLU_046061_0_1_1"/>
<dbReference type="InParanoid" id="Q4WDK4"/>
<dbReference type="OMA" id="LMDMMGM"/>
<dbReference type="OrthoDB" id="10252405at2759"/>
<dbReference type="Proteomes" id="UP000002530">
    <property type="component" value="Chromosome 6"/>
</dbReference>
<dbReference type="GO" id="GO:0005829">
    <property type="term" value="C:cytosol"/>
    <property type="evidence" value="ECO:0000318"/>
    <property type="project" value="GO_Central"/>
</dbReference>
<dbReference type="GO" id="GO:0072380">
    <property type="term" value="C:TRC complex"/>
    <property type="evidence" value="ECO:0000318"/>
    <property type="project" value="GO_Central"/>
</dbReference>
<dbReference type="GO" id="GO:0045048">
    <property type="term" value="P:protein insertion into ER membrane"/>
    <property type="evidence" value="ECO:0000318"/>
    <property type="project" value="GO_Central"/>
</dbReference>
<dbReference type="GO" id="GO:0016192">
    <property type="term" value="P:vesicle-mediated transport"/>
    <property type="evidence" value="ECO:0007669"/>
    <property type="project" value="UniProtKB-KW"/>
</dbReference>
<dbReference type="FunFam" id="1.25.40.10:FF:000272">
    <property type="entry name" value="DUF410 domain protein"/>
    <property type="match status" value="1"/>
</dbReference>
<dbReference type="Gene3D" id="1.25.40.10">
    <property type="entry name" value="Tetratricopeptide repeat domain"/>
    <property type="match status" value="1"/>
</dbReference>
<dbReference type="InterPro" id="IPR007317">
    <property type="entry name" value="GET4"/>
</dbReference>
<dbReference type="InterPro" id="IPR011990">
    <property type="entry name" value="TPR-like_helical_dom_sf"/>
</dbReference>
<dbReference type="PANTHER" id="PTHR12875">
    <property type="entry name" value="GOLGI TO ER TRAFFIC PROTEIN 4 HOMOLOG"/>
    <property type="match status" value="1"/>
</dbReference>
<dbReference type="PANTHER" id="PTHR12875:SF0">
    <property type="entry name" value="GOLGI TO ER TRAFFIC PROTEIN 4 HOMOLOG"/>
    <property type="match status" value="1"/>
</dbReference>
<dbReference type="Pfam" id="PF04190">
    <property type="entry name" value="GET4"/>
    <property type="match status" value="1"/>
</dbReference>
<feature type="chain" id="PRO_0000459358" description="Golgi to ER traffic protein 4">
    <location>
        <begin position="1"/>
        <end position="346"/>
    </location>
</feature>
<feature type="region of interest" description="Disordered" evidence="2">
    <location>
        <begin position="317"/>
        <end position="346"/>
    </location>
</feature>
<feature type="compositionally biased region" description="Polar residues" evidence="2">
    <location>
        <begin position="321"/>
        <end position="335"/>
    </location>
</feature>
<sequence length="346" mass="37928">MTSRIDKTIARQREKIASGAYYEAHQQLRVIAARYIKQSNYEAAAEILAGGATALLRAGSQQGASASGGDLAIMLVDEVYTKAGWGITGGDDDAEGRARKKRLIELLREFPSEEPTRKRFIQEMIGWSGRFGPVERGDAELHHAAGSVYAEDNEPYDAEKHLVLGTSESAETLAKLEYEWYTNDEPHTAAIYASRAVFPYLLVGNLRNANKAFLVFTSRLSSSNTSLGVQEVSSASSDVRVFPSLPLLNFISMLLLTIQRGSADLFKQLTAHYASQIREVGIWDDALSQIGEQYFAIKVPRQGNPLLDMMGSMLFGGQNQGGSRRTPQGRSQSKTVEAPPASMELD</sequence>
<accession>Q4WDK4</accession>
<evidence type="ECO:0000250" key="1">
    <source>
        <dbReference type="UniProtKB" id="Q12125"/>
    </source>
</evidence>
<evidence type="ECO:0000256" key="2">
    <source>
        <dbReference type="SAM" id="MobiDB-lite"/>
    </source>
</evidence>
<evidence type="ECO:0000269" key="3">
    <source>
    </source>
</evidence>
<evidence type="ECO:0000269" key="4">
    <source>
    </source>
</evidence>
<evidence type="ECO:0000303" key="5">
    <source>
    </source>
</evidence>
<evidence type="ECO:0000305" key="6"/>
<organism>
    <name type="scientific">Aspergillus fumigatus (strain ATCC MYA-4609 / CBS 101355 / FGSC A1100 / Af293)</name>
    <name type="common">Neosartorya fumigata</name>
    <dbReference type="NCBI Taxonomy" id="330879"/>
    <lineage>
        <taxon>Eukaryota</taxon>
        <taxon>Fungi</taxon>
        <taxon>Dikarya</taxon>
        <taxon>Ascomycota</taxon>
        <taxon>Pezizomycotina</taxon>
        <taxon>Eurotiomycetes</taxon>
        <taxon>Eurotiomycetidae</taxon>
        <taxon>Eurotiales</taxon>
        <taxon>Aspergillaceae</taxon>
        <taxon>Aspergillus</taxon>
        <taxon>Aspergillus subgen. Fumigati</taxon>
    </lineage>
</organism>
<reference key="1">
    <citation type="journal article" date="2005" name="Nature">
        <title>Genomic sequence of the pathogenic and allergenic filamentous fungus Aspergillus fumigatus.</title>
        <authorList>
            <person name="Nierman W.C."/>
            <person name="Pain A."/>
            <person name="Anderson M.J."/>
            <person name="Wortman J.R."/>
            <person name="Kim H.S."/>
            <person name="Arroyo J."/>
            <person name="Berriman M."/>
            <person name="Abe K."/>
            <person name="Archer D.B."/>
            <person name="Bermejo C."/>
            <person name="Bennett J.W."/>
            <person name="Bowyer P."/>
            <person name="Chen D."/>
            <person name="Collins M."/>
            <person name="Coulsen R."/>
            <person name="Davies R."/>
            <person name="Dyer P.S."/>
            <person name="Farman M.L."/>
            <person name="Fedorova N."/>
            <person name="Fedorova N.D."/>
            <person name="Feldblyum T.V."/>
            <person name="Fischer R."/>
            <person name="Fosker N."/>
            <person name="Fraser A."/>
            <person name="Garcia J.L."/>
            <person name="Garcia M.J."/>
            <person name="Goble A."/>
            <person name="Goldman G.H."/>
            <person name="Gomi K."/>
            <person name="Griffith-Jones S."/>
            <person name="Gwilliam R."/>
            <person name="Haas B.J."/>
            <person name="Haas H."/>
            <person name="Harris D.E."/>
            <person name="Horiuchi H."/>
            <person name="Huang J."/>
            <person name="Humphray S."/>
            <person name="Jimenez J."/>
            <person name="Keller N."/>
            <person name="Khouri H."/>
            <person name="Kitamoto K."/>
            <person name="Kobayashi T."/>
            <person name="Konzack S."/>
            <person name="Kulkarni R."/>
            <person name="Kumagai T."/>
            <person name="Lafton A."/>
            <person name="Latge J.-P."/>
            <person name="Li W."/>
            <person name="Lord A."/>
            <person name="Lu C."/>
            <person name="Majoros W.H."/>
            <person name="May G.S."/>
            <person name="Miller B.L."/>
            <person name="Mohamoud Y."/>
            <person name="Molina M."/>
            <person name="Monod M."/>
            <person name="Mouyna I."/>
            <person name="Mulligan S."/>
            <person name="Murphy L.D."/>
            <person name="O'Neil S."/>
            <person name="Paulsen I."/>
            <person name="Penalva M.A."/>
            <person name="Pertea M."/>
            <person name="Price C."/>
            <person name="Pritchard B.L."/>
            <person name="Quail M.A."/>
            <person name="Rabbinowitsch E."/>
            <person name="Rawlins N."/>
            <person name="Rajandream M.A."/>
            <person name="Reichard U."/>
            <person name="Renauld H."/>
            <person name="Robson G.D."/>
            <person name="Rodriguez de Cordoba S."/>
            <person name="Rodriguez-Pena J.M."/>
            <person name="Ronning C.M."/>
            <person name="Rutter S."/>
            <person name="Salzberg S.L."/>
            <person name="Sanchez M."/>
            <person name="Sanchez-Ferrero J.C."/>
            <person name="Saunders D."/>
            <person name="Seeger K."/>
            <person name="Squares R."/>
            <person name="Squares S."/>
            <person name="Takeuchi M."/>
            <person name="Tekaia F."/>
            <person name="Turner G."/>
            <person name="Vazquez de Aldana C.R."/>
            <person name="Weidman J."/>
            <person name="White O."/>
            <person name="Woodward J.R."/>
            <person name="Yu J.-H."/>
            <person name="Fraser C.M."/>
            <person name="Galagan J.E."/>
            <person name="Asai K."/>
            <person name="Machida M."/>
            <person name="Hall N."/>
            <person name="Barrell B.G."/>
            <person name="Denning D.W."/>
        </authorList>
    </citation>
    <scope>NUCLEOTIDE SEQUENCE [LARGE SCALE GENOMIC DNA]</scope>
    <source>
        <strain>ATCC MYA-4609 / CBS 101355 / FGSC A1100 / Af293</strain>
    </source>
</reference>
<reference key="2">
    <citation type="journal article" date="2011" name="J. Biol. Chem.">
        <title>A structural model of the Sgt2 protein and its interactions with chaperones and the Get4/Get5 complex.</title>
        <authorList>
            <person name="Chartron J.W."/>
            <person name="Gonzalez G.M."/>
            <person name="Clemons W.M."/>
        </authorList>
    </citation>
    <scope>FUNCTION</scope>
    <scope>SUBUNIT</scope>
</reference>
<reference key="3">
    <citation type="journal article" date="2012" name="J. Biol. Chem.">
        <title>Get5 carboxyl-terminal domain is a novel dimerization motif that tethers an extended Get4/Get5 complex.</title>
        <authorList>
            <person name="Chartron J.W."/>
            <person name="VanderVelde D.G."/>
            <person name="Rao M."/>
            <person name="Clemons W.M."/>
        </authorList>
    </citation>
    <scope>FUNCTION</scope>
    <scope>SUBUNIT</scope>
</reference>
<protein>
    <recommendedName>
        <fullName evidence="5">Golgi to ER traffic protein 4</fullName>
    </recommendedName>
</protein>
<comment type="function">
    <text evidence="3 4">Component of the get4/get5/sgt2 sorting complex involved in the GET (guided entry of TA proteins) pathway that leads to the insertion of tail-anchored (TA) proteins into the endoplasmic reticulum (PubMed:21832041, PubMed:22262836). Get4 and get5 form an obligate complex that catalyzes the transfer of tail-anchored proteins destined to the endoplasmic reticulum from sgt2 to the cytosolic targeting factor which then targets the TA protein to the ER membrane via get1/get2 (PubMed:21832041, PubMed:22262836).</text>
</comment>
<comment type="subunit">
    <text evidence="3 4">Component of the get4/get5/sgt2 sorting complex.</text>
</comment>
<comment type="subcellular location">
    <subcellularLocation>
        <location evidence="1">Cytoplasm</location>
    </subcellularLocation>
</comment>
<comment type="similarity">
    <text evidence="6">Belongs to the GET4 family.</text>
</comment>
<gene>
    <name evidence="5" type="primary">get4</name>
    <name type="ORF">AFUA_6G05050</name>
</gene>